<name>RIMM_BORPA</name>
<evidence type="ECO:0000255" key="1">
    <source>
        <dbReference type="HAMAP-Rule" id="MF_00014"/>
    </source>
</evidence>
<comment type="function">
    <text evidence="1">An accessory protein needed during the final step in the assembly of 30S ribosomal subunit, possibly for assembly of the head region. Essential for efficient processing of 16S rRNA. May be needed both before and after RbfA during the maturation of 16S rRNA. It has affinity for free ribosomal 30S subunits but not for 70S ribosomes.</text>
</comment>
<comment type="subunit">
    <text evidence="1">Binds ribosomal protein uS19.</text>
</comment>
<comment type="subcellular location">
    <subcellularLocation>
        <location evidence="1">Cytoplasm</location>
    </subcellularLocation>
</comment>
<comment type="domain">
    <text evidence="1">The PRC barrel domain binds ribosomal protein uS19.</text>
</comment>
<comment type="similarity">
    <text evidence="1">Belongs to the RimM family.</text>
</comment>
<keyword id="KW-0143">Chaperone</keyword>
<keyword id="KW-0963">Cytoplasm</keyword>
<keyword id="KW-0690">Ribosome biogenesis</keyword>
<keyword id="KW-0698">rRNA processing</keyword>
<accession>Q7W6N7</accession>
<feature type="chain" id="PRO_0000163261" description="Ribosome maturation factor RimM">
    <location>
        <begin position="1"/>
        <end position="207"/>
    </location>
</feature>
<feature type="domain" description="PRC barrel" evidence="1">
    <location>
        <begin position="114"/>
        <end position="207"/>
    </location>
</feature>
<protein>
    <recommendedName>
        <fullName evidence="1">Ribosome maturation factor RimM</fullName>
    </recommendedName>
</protein>
<organism>
    <name type="scientific">Bordetella parapertussis (strain 12822 / ATCC BAA-587 / NCTC 13253)</name>
    <dbReference type="NCBI Taxonomy" id="257311"/>
    <lineage>
        <taxon>Bacteria</taxon>
        <taxon>Pseudomonadati</taxon>
        <taxon>Pseudomonadota</taxon>
        <taxon>Betaproteobacteria</taxon>
        <taxon>Burkholderiales</taxon>
        <taxon>Alcaligenaceae</taxon>
        <taxon>Bordetella</taxon>
    </lineage>
</organism>
<dbReference type="EMBL" id="BX640431">
    <property type="protein sequence ID" value="CAE38158.1"/>
    <property type="molecule type" value="Genomic_DNA"/>
</dbReference>
<dbReference type="RefSeq" id="WP_003810674.1">
    <property type="nucleotide sequence ID" value="NC_002928.3"/>
</dbReference>
<dbReference type="SMR" id="Q7W6N7"/>
<dbReference type="GeneID" id="93204653"/>
<dbReference type="KEGG" id="bpa:BPP2866"/>
<dbReference type="HOGENOM" id="CLU_077636_1_0_4"/>
<dbReference type="Proteomes" id="UP000001421">
    <property type="component" value="Chromosome"/>
</dbReference>
<dbReference type="GO" id="GO:0005737">
    <property type="term" value="C:cytoplasm"/>
    <property type="evidence" value="ECO:0007669"/>
    <property type="project" value="UniProtKB-SubCell"/>
</dbReference>
<dbReference type="GO" id="GO:0005840">
    <property type="term" value="C:ribosome"/>
    <property type="evidence" value="ECO:0007669"/>
    <property type="project" value="InterPro"/>
</dbReference>
<dbReference type="GO" id="GO:0043022">
    <property type="term" value="F:ribosome binding"/>
    <property type="evidence" value="ECO:0007669"/>
    <property type="project" value="InterPro"/>
</dbReference>
<dbReference type="GO" id="GO:0042274">
    <property type="term" value="P:ribosomal small subunit biogenesis"/>
    <property type="evidence" value="ECO:0007669"/>
    <property type="project" value="UniProtKB-UniRule"/>
</dbReference>
<dbReference type="GO" id="GO:0006364">
    <property type="term" value="P:rRNA processing"/>
    <property type="evidence" value="ECO:0007669"/>
    <property type="project" value="UniProtKB-UniRule"/>
</dbReference>
<dbReference type="Gene3D" id="2.30.30.240">
    <property type="entry name" value="PRC-barrel domain"/>
    <property type="match status" value="1"/>
</dbReference>
<dbReference type="Gene3D" id="2.40.30.60">
    <property type="entry name" value="RimM"/>
    <property type="match status" value="1"/>
</dbReference>
<dbReference type="HAMAP" id="MF_00014">
    <property type="entry name" value="Ribosome_mat_RimM"/>
    <property type="match status" value="1"/>
</dbReference>
<dbReference type="InterPro" id="IPR011033">
    <property type="entry name" value="PRC_barrel-like_sf"/>
</dbReference>
<dbReference type="InterPro" id="IPR056792">
    <property type="entry name" value="PRC_RimM"/>
</dbReference>
<dbReference type="InterPro" id="IPR011961">
    <property type="entry name" value="RimM"/>
</dbReference>
<dbReference type="InterPro" id="IPR002676">
    <property type="entry name" value="RimM_N"/>
</dbReference>
<dbReference type="InterPro" id="IPR036976">
    <property type="entry name" value="RimM_N_sf"/>
</dbReference>
<dbReference type="InterPro" id="IPR009000">
    <property type="entry name" value="Transl_B-barrel_sf"/>
</dbReference>
<dbReference type="NCBIfam" id="TIGR02273">
    <property type="entry name" value="16S_RimM"/>
    <property type="match status" value="1"/>
</dbReference>
<dbReference type="PANTHER" id="PTHR33692">
    <property type="entry name" value="RIBOSOME MATURATION FACTOR RIMM"/>
    <property type="match status" value="1"/>
</dbReference>
<dbReference type="PANTHER" id="PTHR33692:SF1">
    <property type="entry name" value="RIBOSOME MATURATION FACTOR RIMM"/>
    <property type="match status" value="1"/>
</dbReference>
<dbReference type="Pfam" id="PF24986">
    <property type="entry name" value="PRC_RimM"/>
    <property type="match status" value="1"/>
</dbReference>
<dbReference type="Pfam" id="PF01782">
    <property type="entry name" value="RimM"/>
    <property type="match status" value="1"/>
</dbReference>
<dbReference type="SUPFAM" id="SSF50346">
    <property type="entry name" value="PRC-barrel domain"/>
    <property type="match status" value="1"/>
</dbReference>
<dbReference type="SUPFAM" id="SSF50447">
    <property type="entry name" value="Translation proteins"/>
    <property type="match status" value="1"/>
</dbReference>
<proteinExistence type="inferred from homology"/>
<gene>
    <name evidence="1" type="primary">rimM</name>
    <name type="ordered locus">BPP2866</name>
</gene>
<reference key="1">
    <citation type="journal article" date="2003" name="Nat. Genet.">
        <title>Comparative analysis of the genome sequences of Bordetella pertussis, Bordetella parapertussis and Bordetella bronchiseptica.</title>
        <authorList>
            <person name="Parkhill J."/>
            <person name="Sebaihia M."/>
            <person name="Preston A."/>
            <person name="Murphy L.D."/>
            <person name="Thomson N.R."/>
            <person name="Harris D.E."/>
            <person name="Holden M.T.G."/>
            <person name="Churcher C.M."/>
            <person name="Bentley S.D."/>
            <person name="Mungall K.L."/>
            <person name="Cerdeno-Tarraga A.-M."/>
            <person name="Temple L."/>
            <person name="James K.D."/>
            <person name="Harris B."/>
            <person name="Quail M.A."/>
            <person name="Achtman M."/>
            <person name="Atkin R."/>
            <person name="Baker S."/>
            <person name="Basham D."/>
            <person name="Bason N."/>
            <person name="Cherevach I."/>
            <person name="Chillingworth T."/>
            <person name="Collins M."/>
            <person name="Cronin A."/>
            <person name="Davis P."/>
            <person name="Doggett J."/>
            <person name="Feltwell T."/>
            <person name="Goble A."/>
            <person name="Hamlin N."/>
            <person name="Hauser H."/>
            <person name="Holroyd S."/>
            <person name="Jagels K."/>
            <person name="Leather S."/>
            <person name="Moule S."/>
            <person name="Norberczak H."/>
            <person name="O'Neil S."/>
            <person name="Ormond D."/>
            <person name="Price C."/>
            <person name="Rabbinowitsch E."/>
            <person name="Rutter S."/>
            <person name="Sanders M."/>
            <person name="Saunders D."/>
            <person name="Seeger K."/>
            <person name="Sharp S."/>
            <person name="Simmonds M."/>
            <person name="Skelton J."/>
            <person name="Squares R."/>
            <person name="Squares S."/>
            <person name="Stevens K."/>
            <person name="Unwin L."/>
            <person name="Whitehead S."/>
            <person name="Barrell B.G."/>
            <person name="Maskell D.J."/>
        </authorList>
    </citation>
    <scope>NUCLEOTIDE SEQUENCE [LARGE SCALE GENOMIC DNA]</scope>
    <source>
        <strain>12822 / ATCC BAA-587 / NCTC 13253</strain>
    </source>
</reference>
<sequence length="207" mass="22358">MSEAAHSGAAPADLVELGRIASAYGVKGWVKVQPHSAQAEVLRTVSHWWLTRPAPQAARGVVASVPRAYQVLQARVHGGAVVAQLAGIDDRDQAEALRGCLVQAARSAFPAPADDEYYWVDLIGCALYSDADGESRLLGVVDEVFDNGAHAVLKVLRQQLQPGQPGPVPLVDPKGRPLEELVPFVRAHIRHVDLAARRIDSDWPLDY</sequence>